<evidence type="ECO:0000255" key="1">
    <source>
        <dbReference type="HAMAP-Rule" id="MF_00381"/>
    </source>
</evidence>
<protein>
    <recommendedName>
        <fullName evidence="1">Integration host factor subunit beta</fullName>
        <shortName evidence="1">IHF-beta</shortName>
    </recommendedName>
</protein>
<reference key="1">
    <citation type="submission" date="2009-03" db="EMBL/GenBank/DDBJ databases">
        <title>Complete genome sequence of Edwardsiella ictaluri 93-146.</title>
        <authorList>
            <person name="Williams M.L."/>
            <person name="Gillaspy A.F."/>
            <person name="Dyer D.W."/>
            <person name="Thune R.L."/>
            <person name="Waldbieser G.C."/>
            <person name="Schuster S.C."/>
            <person name="Gipson J."/>
            <person name="Zaitshik J."/>
            <person name="Landry C."/>
            <person name="Lawrence M.L."/>
        </authorList>
    </citation>
    <scope>NUCLEOTIDE SEQUENCE [LARGE SCALE GENOMIC DNA]</scope>
    <source>
        <strain>93-146</strain>
    </source>
</reference>
<sequence>MTKSELIERLASQQPHLPAKAVEDAVKEMLEHMAATLADGERIEIRGFGSFSLHYRAPRIGRNPKTGEKVELEGKYVPHFKPGKELRDRANIYA</sequence>
<organism>
    <name type="scientific">Edwardsiella ictaluri (strain 93-146)</name>
    <dbReference type="NCBI Taxonomy" id="634503"/>
    <lineage>
        <taxon>Bacteria</taxon>
        <taxon>Pseudomonadati</taxon>
        <taxon>Pseudomonadota</taxon>
        <taxon>Gammaproteobacteria</taxon>
        <taxon>Enterobacterales</taxon>
        <taxon>Hafniaceae</taxon>
        <taxon>Edwardsiella</taxon>
    </lineage>
</organism>
<name>IHFB_EDWI9</name>
<keyword id="KW-0233">DNA recombination</keyword>
<keyword id="KW-0238">DNA-binding</keyword>
<keyword id="KW-0804">Transcription</keyword>
<keyword id="KW-0805">Transcription regulation</keyword>
<keyword id="KW-0810">Translation regulation</keyword>
<comment type="function">
    <text evidence="1">This protein is one of the two subunits of integration host factor, a specific DNA-binding protein that functions in genetic recombination as well as in transcriptional and translational control.</text>
</comment>
<comment type="subunit">
    <text evidence="1">Heterodimer of an alpha and a beta chain.</text>
</comment>
<comment type="similarity">
    <text evidence="1">Belongs to the bacterial histone-like protein family.</text>
</comment>
<proteinExistence type="inferred from homology"/>
<feature type="chain" id="PRO_1000205696" description="Integration host factor subunit beta">
    <location>
        <begin position="1"/>
        <end position="94"/>
    </location>
</feature>
<accession>C5BBR9</accession>
<gene>
    <name evidence="1" type="primary">ihfB</name>
    <name evidence="1" type="synonym">himD</name>
    <name type="ordered locus">NT01EI_2454</name>
</gene>
<dbReference type="EMBL" id="CP001600">
    <property type="protein sequence ID" value="ACR69624.1"/>
    <property type="molecule type" value="Genomic_DNA"/>
</dbReference>
<dbReference type="RefSeq" id="WP_005287510.1">
    <property type="nucleotide sequence ID" value="NZ_CP169062.1"/>
</dbReference>
<dbReference type="SMR" id="C5BBR9"/>
<dbReference type="STRING" id="67780.B6E78_04410"/>
<dbReference type="GeneID" id="93124543"/>
<dbReference type="KEGG" id="eic:NT01EI_2454"/>
<dbReference type="HOGENOM" id="CLU_105066_2_0_6"/>
<dbReference type="OrthoDB" id="9804203at2"/>
<dbReference type="Proteomes" id="UP000001485">
    <property type="component" value="Chromosome"/>
</dbReference>
<dbReference type="GO" id="GO:0005694">
    <property type="term" value="C:chromosome"/>
    <property type="evidence" value="ECO:0007669"/>
    <property type="project" value="InterPro"/>
</dbReference>
<dbReference type="GO" id="GO:0005829">
    <property type="term" value="C:cytosol"/>
    <property type="evidence" value="ECO:0007669"/>
    <property type="project" value="TreeGrafter"/>
</dbReference>
<dbReference type="GO" id="GO:0003677">
    <property type="term" value="F:DNA binding"/>
    <property type="evidence" value="ECO:0007669"/>
    <property type="project" value="UniProtKB-UniRule"/>
</dbReference>
<dbReference type="GO" id="GO:0030527">
    <property type="term" value="F:structural constituent of chromatin"/>
    <property type="evidence" value="ECO:0007669"/>
    <property type="project" value="InterPro"/>
</dbReference>
<dbReference type="GO" id="GO:0006310">
    <property type="term" value="P:DNA recombination"/>
    <property type="evidence" value="ECO:0007669"/>
    <property type="project" value="UniProtKB-UniRule"/>
</dbReference>
<dbReference type="GO" id="GO:0006355">
    <property type="term" value="P:regulation of DNA-templated transcription"/>
    <property type="evidence" value="ECO:0007669"/>
    <property type="project" value="UniProtKB-UniRule"/>
</dbReference>
<dbReference type="GO" id="GO:0006417">
    <property type="term" value="P:regulation of translation"/>
    <property type="evidence" value="ECO:0007669"/>
    <property type="project" value="UniProtKB-UniRule"/>
</dbReference>
<dbReference type="CDD" id="cd13836">
    <property type="entry name" value="IHF_B"/>
    <property type="match status" value="1"/>
</dbReference>
<dbReference type="FunFam" id="4.10.520.10:FF:000003">
    <property type="entry name" value="Integration host factor subunit beta"/>
    <property type="match status" value="1"/>
</dbReference>
<dbReference type="Gene3D" id="4.10.520.10">
    <property type="entry name" value="IHF-like DNA-binding proteins"/>
    <property type="match status" value="1"/>
</dbReference>
<dbReference type="HAMAP" id="MF_00381">
    <property type="entry name" value="IHF_beta"/>
    <property type="match status" value="1"/>
</dbReference>
<dbReference type="InterPro" id="IPR000119">
    <property type="entry name" value="Hist_DNA-bd"/>
</dbReference>
<dbReference type="InterPro" id="IPR020816">
    <property type="entry name" value="Histone-like_DNA-bd_CS"/>
</dbReference>
<dbReference type="InterPro" id="IPR010992">
    <property type="entry name" value="IHF-like_DNA-bd_dom_sf"/>
</dbReference>
<dbReference type="InterPro" id="IPR005685">
    <property type="entry name" value="IHF_beta"/>
</dbReference>
<dbReference type="NCBIfam" id="TIGR00988">
    <property type="entry name" value="hip"/>
    <property type="match status" value="1"/>
</dbReference>
<dbReference type="NCBIfam" id="NF001222">
    <property type="entry name" value="PRK00199.1"/>
    <property type="match status" value="1"/>
</dbReference>
<dbReference type="PANTHER" id="PTHR33175">
    <property type="entry name" value="DNA-BINDING PROTEIN HU"/>
    <property type="match status" value="1"/>
</dbReference>
<dbReference type="PANTHER" id="PTHR33175:SF5">
    <property type="entry name" value="INTEGRATION HOST FACTOR SUBUNIT BETA"/>
    <property type="match status" value="1"/>
</dbReference>
<dbReference type="Pfam" id="PF00216">
    <property type="entry name" value="Bac_DNA_binding"/>
    <property type="match status" value="1"/>
</dbReference>
<dbReference type="PRINTS" id="PR01727">
    <property type="entry name" value="DNABINDINGHU"/>
</dbReference>
<dbReference type="SMART" id="SM00411">
    <property type="entry name" value="BHL"/>
    <property type="match status" value="1"/>
</dbReference>
<dbReference type="SUPFAM" id="SSF47729">
    <property type="entry name" value="IHF-like DNA-binding proteins"/>
    <property type="match status" value="1"/>
</dbReference>
<dbReference type="PROSITE" id="PS00045">
    <property type="entry name" value="HISTONE_LIKE"/>
    <property type="match status" value="1"/>
</dbReference>